<feature type="chain" id="PRO_0000453857" description="Terpene cyclase ausL">
    <location>
        <begin position="1"/>
        <end position="245"/>
    </location>
</feature>
<feature type="transmembrane region" description="Helical" evidence="2">
    <location>
        <begin position="17"/>
        <end position="37"/>
    </location>
</feature>
<feature type="transmembrane region" description="Helical" evidence="2">
    <location>
        <begin position="51"/>
        <end position="71"/>
    </location>
</feature>
<feature type="transmembrane region" description="Helical" evidence="2">
    <location>
        <begin position="76"/>
        <end position="96"/>
    </location>
</feature>
<feature type="transmembrane region" description="Helical" evidence="2">
    <location>
        <begin position="113"/>
        <end position="133"/>
    </location>
</feature>
<feature type="transmembrane region" description="Helical" evidence="2">
    <location>
        <begin position="138"/>
        <end position="158"/>
    </location>
</feature>
<feature type="transmembrane region" description="Helical" evidence="2">
    <location>
        <begin position="170"/>
        <end position="190"/>
    </location>
</feature>
<feature type="transmembrane region" description="Helical" evidence="2">
    <location>
        <begin position="206"/>
        <end position="226"/>
    </location>
</feature>
<keyword id="KW-0456">Lyase</keyword>
<keyword id="KW-0472">Membrane</keyword>
<keyword id="KW-1185">Reference proteome</keyword>
<keyword id="KW-0812">Transmembrane</keyword>
<keyword id="KW-1133">Transmembrane helix</keyword>
<name>AUSL_PENBI</name>
<proteinExistence type="inferred from homology"/>
<reference key="1">
    <citation type="journal article" date="2015" name="Genome Announc.">
        <title>Draft genome sequence of the fungus Penicillium brasilianum MG11.</title>
        <authorList>
            <person name="Horn F."/>
            <person name="Linde J."/>
            <person name="Mattern D.J."/>
            <person name="Walther G."/>
            <person name="Guthke R."/>
            <person name="Brakhage A.A."/>
            <person name="Valiante V."/>
        </authorList>
    </citation>
    <scope>NUCLEOTIDE SEQUENCE [LARGE SCALE GENOMIC DNA]</scope>
    <source>
        <strain>MG11</strain>
    </source>
</reference>
<reference key="2">
    <citation type="journal article" date="2016" name="J. Am. Chem. Soc.">
        <title>Discovery of key dioxygenases that diverged the paraherquonin and acetoxydehydroaustin pathways in Penicillium brasilianum.</title>
        <authorList>
            <person name="Matsuda Y."/>
            <person name="Iwabuchi T."/>
            <person name="Fujimoto T."/>
            <person name="Awakawa T."/>
            <person name="Nakashima Y."/>
            <person name="Mori T."/>
            <person name="Zhang H."/>
            <person name="Hayashi F."/>
            <person name="Abe I."/>
        </authorList>
    </citation>
    <scope>FUNCTION</scope>
</reference>
<reference key="3">
    <citation type="journal article" date="2017" name="ACS Chem. Biol.">
        <title>Rewiring of the austinoid biosynthetic pathway in filamentous fungi.</title>
        <authorList>
            <person name="Mattern D.J."/>
            <person name="Valiante V."/>
            <person name="Horn F."/>
            <person name="Petzke L."/>
            <person name="Brakhage A.A."/>
        </authorList>
    </citation>
    <scope>FUNCTION</scope>
</reference>
<organism>
    <name type="scientific">Penicillium brasilianum</name>
    <dbReference type="NCBI Taxonomy" id="104259"/>
    <lineage>
        <taxon>Eukaryota</taxon>
        <taxon>Fungi</taxon>
        <taxon>Dikarya</taxon>
        <taxon>Ascomycota</taxon>
        <taxon>Pezizomycotina</taxon>
        <taxon>Eurotiomycetes</taxon>
        <taxon>Eurotiomycetidae</taxon>
        <taxon>Eurotiales</taxon>
        <taxon>Aspergillaceae</taxon>
        <taxon>Penicillium</taxon>
    </lineage>
</organism>
<accession>A0A0F7TZE0</accession>
<protein>
    <recommendedName>
        <fullName evidence="4">Terpene cyclase ausL</fullName>
        <ecNumber evidence="6">4.2.3.-</ecNumber>
    </recommendedName>
    <alternativeName>
        <fullName evidence="4">Austinoid biosynthesis clusters protein L</fullName>
    </alternativeName>
</protein>
<gene>
    <name evidence="4" type="primary">ausL</name>
    <name type="ORF">PMG11_09852</name>
</gene>
<comment type="function">
    <text evidence="1 3">Terpene cyclase; part of the gene cluster A that mediates the biosynthesis of the fungal meroterpenoid acetoxydehydroaustin (PubMed:29076725). The first step of the pathway is the synthesis of 3,5-dimethylorsellinic acid by the polyketide synthase ausA (By similarity). 3,5-dimethylorsellinic acid is then prenylated by the polyprenyl transferase ausN (By similarity). Further epoxidation by the FAD-dependent monooxygenase ausM and cyclization by the probable terpene cyclase ausL lead to the formation of protoaustinoid A (By similarity). Protoaustinoid A is then oxidized to spiro-lactone preaustinoid A3 by the combined action of the FAD-binding monooxygenases ausB and ausC, and the dioxygenase ausE (By similarity). Acid-catalyzed keto-rearrangement and ring contraction of the tetraketide portion of preaustinoid A3 by ausJ lead to the formation of preaustinoid A4 (By similarity). The aldo-keto reductase ausK, with the help of ausH, is involved in the next step by transforming preaustinoid A4 into isoaustinone which is in turn hydroxylated by the P450 monooxygenase ausI to form austinolide (By similarity). The cytochrome P450 monooxygenase ausG then modifies austinolide to austinol (By similarity). Austinol is further acetylated to austin by the O-acetyltransferase ausP, which spontaneously changes to dehydroaustin (PubMed:29076725). The cytochrome P450 monooxygenase then converts dehydroaustin is into 7-dehydrodehydroaustin (PubMed:29076725). The hydroxylation catalyzed by ausR permits the second O-acetyltransferase ausQ to add an additional acetyl group to the molecule, leading to the formation of acetoxydehydroaustin (PubMed:29076725). Due to genetic rearrangements of the clusters and the subsequent loss of some enzymes, the end product of the Penicillium brasilianum austinoid biosynthesis clusters is acetoxydehydroaustin (PubMed:29076725).</text>
</comment>
<comment type="pathway">
    <text evidence="6">Secondary metabolite biosynthesis; terpenoid biosynthesis.</text>
</comment>
<comment type="subcellular location">
    <subcellularLocation>
        <location evidence="2">Membrane</location>
        <topology evidence="2">Multi-pass membrane protein</topology>
    </subcellularLocation>
</comment>
<comment type="miscellaneous">
    <text evidence="6">In A.calidoustus, the austinoid gene cluster lies on a contiguous DNA region, while clusters from E.nidulans and P.brasilianum are split in their respective genomes. Genetic rearrangements provoked variability among the clusters and E.nidulans produces the least number of austionoid derivatives with the end products austinol and dehydroaustinol, while P.brasilianum can produce until acetoxydehydroaustin, and A.calidoustus produces the highest number of identified derivatives.</text>
</comment>
<comment type="similarity">
    <text evidence="5">Belongs to the paxB family.</text>
</comment>
<sequence length="245" mass="27613">MEEPLTVAAIFRGPFNILAISEVLKVVAAVGWSVNYIGMVHRAWKDQIPSIGILPLCCDIGWEFVYAWMFPDFSSHWQGVVRVWFFLHSAVLLVTLKVSPNDWANTPLAHRHIVFIYIFVTIVFGAGQYALAAEIGPALGFHWGGALCQFLSSSGGIAQLLSRGHTRGASYLIWFARAISTFAGFIKLCIRFQHNVDGAPWLDSPMCWFYIVTVLSFDAAYPFLYFSMRKFETPAPQREARIKKQ</sequence>
<evidence type="ECO:0000250" key="1">
    <source>
        <dbReference type="UniProtKB" id="Q5AR23"/>
    </source>
</evidence>
<evidence type="ECO:0000255" key="2"/>
<evidence type="ECO:0000269" key="3">
    <source>
    </source>
</evidence>
<evidence type="ECO:0000303" key="4">
    <source>
    </source>
</evidence>
<evidence type="ECO:0000305" key="5"/>
<evidence type="ECO:0000305" key="6">
    <source>
    </source>
</evidence>
<dbReference type="EC" id="4.2.3.-" evidence="6"/>
<dbReference type="EMBL" id="CDHK01000010">
    <property type="protein sequence ID" value="CEJ61316.1"/>
    <property type="molecule type" value="Genomic_DNA"/>
</dbReference>
<dbReference type="STRING" id="104259.A0A0F7TZE0"/>
<dbReference type="OrthoDB" id="5294024at2759"/>
<dbReference type="UniPathway" id="UPA00213"/>
<dbReference type="Proteomes" id="UP000042958">
    <property type="component" value="Unassembled WGS sequence"/>
</dbReference>
<dbReference type="GO" id="GO:0016020">
    <property type="term" value="C:membrane"/>
    <property type="evidence" value="ECO:0007669"/>
    <property type="project" value="UniProtKB-SubCell"/>
</dbReference>
<dbReference type="GO" id="GO:0016829">
    <property type="term" value="F:lyase activity"/>
    <property type="evidence" value="ECO:0007669"/>
    <property type="project" value="UniProtKB-KW"/>
</dbReference>
<dbReference type="GO" id="GO:0016114">
    <property type="term" value="P:terpenoid biosynthetic process"/>
    <property type="evidence" value="ECO:0007669"/>
    <property type="project" value="UniProtKB-UniPathway"/>
</dbReference>
<dbReference type="InterPro" id="IPR039020">
    <property type="entry name" value="PaxB-like"/>
</dbReference>
<dbReference type="PANTHER" id="PTHR42038">
    <property type="match status" value="1"/>
</dbReference>
<dbReference type="PANTHER" id="PTHR42038:SF2">
    <property type="entry name" value="TERPENE CYCLASE AUSL"/>
    <property type="match status" value="1"/>
</dbReference>
<dbReference type="Pfam" id="PF25129">
    <property type="entry name" value="Pyr4-TMTC"/>
    <property type="match status" value="1"/>
</dbReference>